<accession>A8FKM1</accession>
<keyword id="KW-0324">Glycolysis</keyword>
<keyword id="KW-0413">Isomerase</keyword>
<keyword id="KW-0464">Manganese</keyword>
<keyword id="KW-0479">Metal-binding</keyword>
<dbReference type="EC" id="5.4.2.12" evidence="1"/>
<dbReference type="EMBL" id="CP000814">
    <property type="protein sequence ID" value="ABV52008.1"/>
    <property type="molecule type" value="Genomic_DNA"/>
</dbReference>
<dbReference type="RefSeq" id="WP_002867004.1">
    <property type="nucleotide sequence ID" value="NC_009839.1"/>
</dbReference>
<dbReference type="SMR" id="A8FKM1"/>
<dbReference type="KEGG" id="cju:C8J_0409"/>
<dbReference type="HOGENOM" id="CLU_026099_2_0_7"/>
<dbReference type="UniPathway" id="UPA00109">
    <property type="reaction ID" value="UER00186"/>
</dbReference>
<dbReference type="GO" id="GO:0005829">
    <property type="term" value="C:cytosol"/>
    <property type="evidence" value="ECO:0007669"/>
    <property type="project" value="TreeGrafter"/>
</dbReference>
<dbReference type="GO" id="GO:0030145">
    <property type="term" value="F:manganese ion binding"/>
    <property type="evidence" value="ECO:0007669"/>
    <property type="project" value="UniProtKB-UniRule"/>
</dbReference>
<dbReference type="GO" id="GO:0004619">
    <property type="term" value="F:phosphoglycerate mutase activity"/>
    <property type="evidence" value="ECO:0007669"/>
    <property type="project" value="UniProtKB-EC"/>
</dbReference>
<dbReference type="GO" id="GO:0006007">
    <property type="term" value="P:glucose catabolic process"/>
    <property type="evidence" value="ECO:0007669"/>
    <property type="project" value="InterPro"/>
</dbReference>
<dbReference type="GO" id="GO:0006096">
    <property type="term" value="P:glycolytic process"/>
    <property type="evidence" value="ECO:0007669"/>
    <property type="project" value="UniProtKB-UniRule"/>
</dbReference>
<dbReference type="CDD" id="cd16010">
    <property type="entry name" value="iPGM"/>
    <property type="match status" value="1"/>
</dbReference>
<dbReference type="FunFam" id="3.40.1450.10:FF:000002">
    <property type="entry name" value="2,3-bisphosphoglycerate-independent phosphoglycerate mutase"/>
    <property type="match status" value="1"/>
</dbReference>
<dbReference type="Gene3D" id="3.40.720.10">
    <property type="entry name" value="Alkaline Phosphatase, subunit A"/>
    <property type="match status" value="1"/>
</dbReference>
<dbReference type="Gene3D" id="3.40.1450.10">
    <property type="entry name" value="BPG-independent phosphoglycerate mutase, domain B"/>
    <property type="match status" value="1"/>
</dbReference>
<dbReference type="HAMAP" id="MF_01038">
    <property type="entry name" value="GpmI"/>
    <property type="match status" value="1"/>
</dbReference>
<dbReference type="InterPro" id="IPR017850">
    <property type="entry name" value="Alkaline_phosphatase_core_sf"/>
</dbReference>
<dbReference type="InterPro" id="IPR011258">
    <property type="entry name" value="BPG-indep_PGM_N"/>
</dbReference>
<dbReference type="InterPro" id="IPR006124">
    <property type="entry name" value="Metalloenzyme"/>
</dbReference>
<dbReference type="InterPro" id="IPR036646">
    <property type="entry name" value="PGAM_B_sf"/>
</dbReference>
<dbReference type="InterPro" id="IPR005995">
    <property type="entry name" value="Pgm_bpd_ind"/>
</dbReference>
<dbReference type="NCBIfam" id="TIGR01307">
    <property type="entry name" value="pgm_bpd_ind"/>
    <property type="match status" value="1"/>
</dbReference>
<dbReference type="PANTHER" id="PTHR31637">
    <property type="entry name" value="2,3-BISPHOSPHOGLYCERATE-INDEPENDENT PHOSPHOGLYCERATE MUTASE"/>
    <property type="match status" value="1"/>
</dbReference>
<dbReference type="PANTHER" id="PTHR31637:SF0">
    <property type="entry name" value="2,3-BISPHOSPHOGLYCERATE-INDEPENDENT PHOSPHOGLYCERATE MUTASE"/>
    <property type="match status" value="1"/>
</dbReference>
<dbReference type="Pfam" id="PF06415">
    <property type="entry name" value="iPGM_N"/>
    <property type="match status" value="1"/>
</dbReference>
<dbReference type="Pfam" id="PF01676">
    <property type="entry name" value="Metalloenzyme"/>
    <property type="match status" value="1"/>
</dbReference>
<dbReference type="PIRSF" id="PIRSF001492">
    <property type="entry name" value="IPGAM"/>
    <property type="match status" value="1"/>
</dbReference>
<dbReference type="SUPFAM" id="SSF64158">
    <property type="entry name" value="2,3-Bisphosphoglycerate-independent phosphoglycerate mutase, substrate-binding domain"/>
    <property type="match status" value="1"/>
</dbReference>
<dbReference type="SUPFAM" id="SSF53649">
    <property type="entry name" value="Alkaline phosphatase-like"/>
    <property type="match status" value="1"/>
</dbReference>
<feature type="chain" id="PRO_1000072980" description="2,3-bisphosphoglycerate-independent phosphoglycerate mutase">
    <location>
        <begin position="1"/>
        <end position="492"/>
    </location>
</feature>
<feature type="active site" description="Phosphoserine intermediate" evidence="1">
    <location>
        <position position="61"/>
    </location>
</feature>
<feature type="binding site" evidence="1">
    <location>
        <position position="11"/>
    </location>
    <ligand>
        <name>Mn(2+)</name>
        <dbReference type="ChEBI" id="CHEBI:29035"/>
        <label>2</label>
    </ligand>
</feature>
<feature type="binding site" evidence="1">
    <location>
        <position position="61"/>
    </location>
    <ligand>
        <name>Mn(2+)</name>
        <dbReference type="ChEBI" id="CHEBI:29035"/>
        <label>2</label>
    </ligand>
</feature>
<feature type="binding site" evidence="1">
    <location>
        <position position="118"/>
    </location>
    <ligand>
        <name>substrate</name>
    </ligand>
</feature>
<feature type="binding site" evidence="1">
    <location>
        <begin position="147"/>
        <end position="148"/>
    </location>
    <ligand>
        <name>substrate</name>
    </ligand>
</feature>
<feature type="binding site" evidence="1">
    <location>
        <position position="178"/>
    </location>
    <ligand>
        <name>substrate</name>
    </ligand>
</feature>
<feature type="binding site" evidence="1">
    <location>
        <position position="184"/>
    </location>
    <ligand>
        <name>substrate</name>
    </ligand>
</feature>
<feature type="binding site" evidence="1">
    <location>
        <begin position="248"/>
        <end position="251"/>
    </location>
    <ligand>
        <name>substrate</name>
    </ligand>
</feature>
<feature type="binding site" evidence="1">
    <location>
        <position position="320"/>
    </location>
    <ligand>
        <name>substrate</name>
    </ligand>
</feature>
<feature type="binding site" evidence="1">
    <location>
        <position position="386"/>
    </location>
    <ligand>
        <name>Mn(2+)</name>
        <dbReference type="ChEBI" id="CHEBI:29035"/>
        <label>1</label>
    </ligand>
</feature>
<feature type="binding site" evidence="1">
    <location>
        <position position="390"/>
    </location>
    <ligand>
        <name>Mn(2+)</name>
        <dbReference type="ChEBI" id="CHEBI:29035"/>
        <label>1</label>
    </ligand>
</feature>
<feature type="binding site" evidence="1">
    <location>
        <position position="427"/>
    </location>
    <ligand>
        <name>Mn(2+)</name>
        <dbReference type="ChEBI" id="CHEBI:29035"/>
        <label>2</label>
    </ligand>
</feature>
<feature type="binding site" evidence="1">
    <location>
        <position position="428"/>
    </location>
    <ligand>
        <name>Mn(2+)</name>
        <dbReference type="ChEBI" id="CHEBI:29035"/>
        <label>2</label>
    </ligand>
</feature>
<feature type="binding site" evidence="1">
    <location>
        <position position="445"/>
    </location>
    <ligand>
        <name>Mn(2+)</name>
        <dbReference type="ChEBI" id="CHEBI:29035"/>
        <label>1</label>
    </ligand>
</feature>
<comment type="function">
    <text evidence="1">Catalyzes the interconversion of 2-phosphoglycerate and 3-phosphoglycerate.</text>
</comment>
<comment type="catalytic activity">
    <reaction evidence="1">
        <text>(2R)-2-phosphoglycerate = (2R)-3-phosphoglycerate</text>
        <dbReference type="Rhea" id="RHEA:15901"/>
        <dbReference type="ChEBI" id="CHEBI:58272"/>
        <dbReference type="ChEBI" id="CHEBI:58289"/>
        <dbReference type="EC" id="5.4.2.12"/>
    </reaction>
</comment>
<comment type="cofactor">
    <cofactor evidence="1">
        <name>Mn(2+)</name>
        <dbReference type="ChEBI" id="CHEBI:29035"/>
    </cofactor>
    <text evidence="1">Binds 2 manganese ions per subunit.</text>
</comment>
<comment type="pathway">
    <text evidence="1">Carbohydrate degradation; glycolysis; pyruvate from D-glyceraldehyde 3-phosphate: step 3/5.</text>
</comment>
<comment type="subunit">
    <text evidence="1">Monomer.</text>
</comment>
<comment type="similarity">
    <text evidence="1">Belongs to the BPG-independent phosphoglycerate mutase family.</text>
</comment>
<organism>
    <name type="scientific">Campylobacter jejuni subsp. jejuni serotype O:6 (strain 81116 / NCTC 11828)</name>
    <dbReference type="NCBI Taxonomy" id="407148"/>
    <lineage>
        <taxon>Bacteria</taxon>
        <taxon>Pseudomonadati</taxon>
        <taxon>Campylobacterota</taxon>
        <taxon>Epsilonproteobacteria</taxon>
        <taxon>Campylobacterales</taxon>
        <taxon>Campylobacteraceae</taxon>
        <taxon>Campylobacter</taxon>
    </lineage>
</organism>
<reference key="1">
    <citation type="journal article" date="2007" name="J. Bacteriol.">
        <title>The complete genome sequence of Campylobacter jejuni strain 81116 (NCTC11828).</title>
        <authorList>
            <person name="Pearson B.M."/>
            <person name="Gaskin D.J.H."/>
            <person name="Segers R.P.A.M."/>
            <person name="Wells J.M."/>
            <person name="Nuijten P.J.M."/>
            <person name="van Vliet A.H.M."/>
        </authorList>
    </citation>
    <scope>NUCLEOTIDE SEQUENCE [LARGE SCALE GENOMIC DNA]</scope>
    <source>
        <strain>81116 / NCTC 11828</strain>
    </source>
</reference>
<evidence type="ECO:0000255" key="1">
    <source>
        <dbReference type="HAMAP-Rule" id="MF_01038"/>
    </source>
</evidence>
<sequence length="492" mass="55649">MKQKCVLIITDGIGYNKNSKFNAFEAAKKPSYEKLFKEVPNSLLKTSGLAVGLPEGQMGNSEVGHMCIGSGRIIYQNLVRINKAIENKELEKNENLQKLLAKCKRVHIIGLYSDGGVHSMDTHFKAMLEICAKNGNEVFAHAITDGRDVSPKSGLNFIKDLKEFCENLGVHFATLCGRFYAMDRDKRWDRVKEYYECLLGKAYKVPNLLEYLQKSYDENVTDEFIKAAQNENYKGMREEDGIIFINFRNDRMKQLVEVLNSKDFKEFEREKIFENLLTMSVYDDKFKLPVLFEKEKIENTLAQVISKAGLSQLHTAETEKYAHVTFFFNGGKEELLENETRVLIPSPKVKTYDEKPQMSAFEVCDAVKKGIEKGEDFIVVNFANGDMVGHTGDFNAAIKAVEAVDTCLGEIVECAKKHDYAFIITSDHGNCEAMQDEKGNLLTNHTTFDVFVFVQAKGVSKIKDNMGLSNIAASVLKILDLEIPKEMNEALF</sequence>
<proteinExistence type="inferred from homology"/>
<name>GPMI_CAMJ8</name>
<protein>
    <recommendedName>
        <fullName evidence="1">2,3-bisphosphoglycerate-independent phosphoglycerate mutase</fullName>
        <shortName evidence="1">BPG-independent PGAM</shortName>
        <shortName evidence="1">Phosphoglyceromutase</shortName>
        <shortName evidence="1">iPGM</shortName>
        <ecNumber evidence="1">5.4.2.12</ecNumber>
    </recommendedName>
</protein>
<gene>
    <name evidence="1" type="primary">gpmI</name>
    <name type="ordered locus">C8J_0409</name>
</gene>